<keyword id="KW-0963">Cytoplasm</keyword>
<keyword id="KW-0521">NADP</keyword>
<keyword id="KW-0560">Oxidoreductase</keyword>
<keyword id="KW-0671">Queuosine biosynthesis</keyword>
<feature type="chain" id="PRO_1000072870" description="NADPH-dependent 7-cyano-7-deazaguanine reductase">
    <location>
        <begin position="1"/>
        <end position="127"/>
    </location>
</feature>
<feature type="active site" description="Thioimide intermediate" evidence="1">
    <location>
        <position position="40"/>
    </location>
</feature>
<feature type="active site" description="Proton donor" evidence="1">
    <location>
        <position position="47"/>
    </location>
</feature>
<feature type="binding site" evidence="1">
    <location>
        <begin position="62"/>
        <end position="64"/>
    </location>
    <ligand>
        <name>substrate</name>
    </ligand>
</feature>
<feature type="binding site" evidence="1">
    <location>
        <begin position="81"/>
        <end position="82"/>
    </location>
    <ligand>
        <name>substrate</name>
    </ligand>
</feature>
<sequence>MRYGEKEIKEFDVENMEIWPNDAKNDYIIKITLPEFMCCCPRSGYPDFATIYLEYMPDKFVVELKAIKLYINTFMYRNVSHEASINEIYNTLKDKLKPKWIKVVGDFNPRGNVHTVIECCSDMVVPK</sequence>
<accession>A8FP38</accession>
<name>QUEF_CAMJ8</name>
<comment type="function">
    <text evidence="1">Catalyzes the NADPH-dependent reduction of 7-cyano-7-deazaguanine (preQ0) to 7-aminomethyl-7-deazaguanine (preQ1).</text>
</comment>
<comment type="catalytic activity">
    <reaction evidence="1">
        <text>7-aminomethyl-7-carbaguanine + 2 NADP(+) = 7-cyano-7-deazaguanine + 2 NADPH + 3 H(+)</text>
        <dbReference type="Rhea" id="RHEA:13409"/>
        <dbReference type="ChEBI" id="CHEBI:15378"/>
        <dbReference type="ChEBI" id="CHEBI:45075"/>
        <dbReference type="ChEBI" id="CHEBI:57783"/>
        <dbReference type="ChEBI" id="CHEBI:58349"/>
        <dbReference type="ChEBI" id="CHEBI:58703"/>
        <dbReference type="EC" id="1.7.1.13"/>
    </reaction>
</comment>
<comment type="pathway">
    <text evidence="1">tRNA modification; tRNA-queuosine biosynthesis.</text>
</comment>
<comment type="subcellular location">
    <subcellularLocation>
        <location evidence="1">Cytoplasm</location>
    </subcellularLocation>
</comment>
<comment type="similarity">
    <text evidence="1">Belongs to the GTP cyclohydrolase I family. QueF type 1 subfamily.</text>
</comment>
<dbReference type="EC" id="1.7.1.13" evidence="1"/>
<dbReference type="EMBL" id="CP000814">
    <property type="protein sequence ID" value="ABV53225.1"/>
    <property type="molecule type" value="Genomic_DNA"/>
</dbReference>
<dbReference type="RefSeq" id="WP_012006802.1">
    <property type="nucleotide sequence ID" value="NC_009839.1"/>
</dbReference>
<dbReference type="SMR" id="A8FP38"/>
<dbReference type="KEGG" id="cju:C8J_1628"/>
<dbReference type="HOGENOM" id="CLU_102489_1_1_7"/>
<dbReference type="UniPathway" id="UPA00392"/>
<dbReference type="GO" id="GO:0005737">
    <property type="term" value="C:cytoplasm"/>
    <property type="evidence" value="ECO:0007669"/>
    <property type="project" value="UniProtKB-SubCell"/>
</dbReference>
<dbReference type="GO" id="GO:0033739">
    <property type="term" value="F:preQ1 synthase activity"/>
    <property type="evidence" value="ECO:0007669"/>
    <property type="project" value="UniProtKB-UniRule"/>
</dbReference>
<dbReference type="GO" id="GO:0008616">
    <property type="term" value="P:queuosine biosynthetic process"/>
    <property type="evidence" value="ECO:0007669"/>
    <property type="project" value="UniProtKB-UniRule"/>
</dbReference>
<dbReference type="GO" id="GO:0006400">
    <property type="term" value="P:tRNA modification"/>
    <property type="evidence" value="ECO:0007669"/>
    <property type="project" value="UniProtKB-UniRule"/>
</dbReference>
<dbReference type="Gene3D" id="3.30.1130.10">
    <property type="match status" value="1"/>
</dbReference>
<dbReference type="HAMAP" id="MF_00818">
    <property type="entry name" value="QueF_type1"/>
    <property type="match status" value="1"/>
</dbReference>
<dbReference type="InterPro" id="IPR043133">
    <property type="entry name" value="GTP-CH-I_C/QueF"/>
</dbReference>
<dbReference type="InterPro" id="IPR050084">
    <property type="entry name" value="NADPH_dep_7-cyano-7-deazaG_red"/>
</dbReference>
<dbReference type="InterPro" id="IPR029500">
    <property type="entry name" value="QueF"/>
</dbReference>
<dbReference type="InterPro" id="IPR016856">
    <property type="entry name" value="QueF_type1"/>
</dbReference>
<dbReference type="NCBIfam" id="TIGR03139">
    <property type="entry name" value="QueF-II"/>
    <property type="match status" value="1"/>
</dbReference>
<dbReference type="PANTHER" id="PTHR34354">
    <property type="entry name" value="NADPH-DEPENDENT 7-CYANO-7-DEAZAGUANINE REDUCTASE"/>
    <property type="match status" value="1"/>
</dbReference>
<dbReference type="PANTHER" id="PTHR34354:SF1">
    <property type="entry name" value="NADPH-DEPENDENT 7-CYANO-7-DEAZAGUANINE REDUCTASE"/>
    <property type="match status" value="1"/>
</dbReference>
<dbReference type="Pfam" id="PF14489">
    <property type="entry name" value="QueF"/>
    <property type="match status" value="1"/>
</dbReference>
<dbReference type="PIRSF" id="PIRSF027377">
    <property type="entry name" value="Nitrile_oxidored_QueF"/>
    <property type="match status" value="1"/>
</dbReference>
<dbReference type="SUPFAM" id="SSF55620">
    <property type="entry name" value="Tetrahydrobiopterin biosynthesis enzymes-like"/>
    <property type="match status" value="1"/>
</dbReference>
<protein>
    <recommendedName>
        <fullName evidence="1">NADPH-dependent 7-cyano-7-deazaguanine reductase</fullName>
        <ecNumber evidence="1">1.7.1.13</ecNumber>
    </recommendedName>
    <alternativeName>
        <fullName evidence="1">7-cyano-7-carbaguanine reductase</fullName>
    </alternativeName>
    <alternativeName>
        <fullName evidence="1">NADPH-dependent nitrile oxidoreductase</fullName>
    </alternativeName>
    <alternativeName>
        <fullName evidence="1">PreQ(0) reductase</fullName>
    </alternativeName>
</protein>
<proteinExistence type="inferred from homology"/>
<reference key="1">
    <citation type="journal article" date="2007" name="J. Bacteriol.">
        <title>The complete genome sequence of Campylobacter jejuni strain 81116 (NCTC11828).</title>
        <authorList>
            <person name="Pearson B.M."/>
            <person name="Gaskin D.J.H."/>
            <person name="Segers R.P.A.M."/>
            <person name="Wells J.M."/>
            <person name="Nuijten P.J.M."/>
            <person name="van Vliet A.H.M."/>
        </authorList>
    </citation>
    <scope>NUCLEOTIDE SEQUENCE [LARGE SCALE GENOMIC DNA]</scope>
    <source>
        <strain>81116 / NCTC 11828</strain>
    </source>
</reference>
<gene>
    <name evidence="1" type="primary">queF</name>
    <name type="ordered locus">C8J_1628</name>
</gene>
<evidence type="ECO:0000255" key="1">
    <source>
        <dbReference type="HAMAP-Rule" id="MF_00818"/>
    </source>
</evidence>
<organism>
    <name type="scientific">Campylobacter jejuni subsp. jejuni serotype O:6 (strain 81116 / NCTC 11828)</name>
    <dbReference type="NCBI Taxonomy" id="407148"/>
    <lineage>
        <taxon>Bacteria</taxon>
        <taxon>Pseudomonadati</taxon>
        <taxon>Campylobacterota</taxon>
        <taxon>Epsilonproteobacteria</taxon>
        <taxon>Campylobacterales</taxon>
        <taxon>Campylobacteraceae</taxon>
        <taxon>Campylobacter</taxon>
    </lineage>
</organism>